<protein>
    <recommendedName>
        <fullName>Protein U25</fullName>
    </recommendedName>
</protein>
<proteinExistence type="inferred from homology"/>
<gene>
    <name type="primary">U25</name>
</gene>
<organism>
    <name type="scientific">Human herpesvirus 6B</name>
    <name type="common">HHV-6 variant B</name>
    <name type="synonym">Human B lymphotropic virus</name>
    <dbReference type="NCBI Taxonomy" id="32604"/>
    <lineage>
        <taxon>Viruses</taxon>
        <taxon>Duplodnaviria</taxon>
        <taxon>Heunggongvirae</taxon>
        <taxon>Peploviricota</taxon>
        <taxon>Herviviricetes</taxon>
        <taxon>Herpesvirales</taxon>
        <taxon>Orthoherpesviridae</taxon>
        <taxon>Betaherpesvirinae</taxon>
        <taxon>Roseolovirus</taxon>
        <taxon>Roseolovirus humanbeta6b</taxon>
    </lineage>
</organism>
<comment type="similarity">
    <text evidence="1">Belongs to the herpesviridae US22 family.</text>
</comment>
<evidence type="ECO:0000305" key="1"/>
<name>VU25_HHV6H</name>
<feature type="chain" id="PRO_0000461150" description="Protein U25">
    <location>
        <begin position="1"/>
        <end position="316"/>
    </location>
</feature>
<reference key="1">
    <citation type="journal article" date="1999" name="J. Virol.">
        <title>Comparison of the complete DNA sequences of human herpesvirus 6 variants A and B.</title>
        <authorList>
            <person name="Isegawa Y."/>
            <person name="Mukai T."/>
            <person name="Nakano K."/>
            <person name="Kagawa M."/>
            <person name="Chen J."/>
            <person name="Mori Y."/>
            <person name="Sunagawa T."/>
            <person name="Kawanishi K."/>
            <person name="Sashihara J."/>
            <person name="Hata A."/>
            <person name="Zou P."/>
            <person name="Kosuge H."/>
            <person name="Yamanishi K."/>
        </authorList>
    </citation>
    <scope>NUCLEOTIDE SEQUENCE [LARGE SCALE GENOMIC DNA]</scope>
    <source>
        <strain>HST</strain>
    </source>
</reference>
<accession>P0DXM8</accession>
<accession>Q77PV2</accession>
<accession>Q9WT39</accession>
<dbReference type="EMBL" id="AB021506">
    <property type="protein sequence ID" value="BAA78246.1"/>
    <property type="molecule type" value="Genomic_DNA"/>
</dbReference>
<dbReference type="PIR" id="T43985">
    <property type="entry name" value="T43985"/>
</dbReference>
<dbReference type="RefSeq" id="NP_050206.1">
    <property type="nucleotide sequence ID" value="NC_000898.1"/>
</dbReference>
<dbReference type="GeneID" id="1497027"/>
<dbReference type="KEGG" id="vg:1497027"/>
<dbReference type="Proteomes" id="UP000142685">
    <property type="component" value="Segment"/>
</dbReference>
<dbReference type="InterPro" id="IPR003360">
    <property type="entry name" value="US22-like"/>
</dbReference>
<dbReference type="Pfam" id="PF02393">
    <property type="entry name" value="US22"/>
    <property type="match status" value="2"/>
</dbReference>
<sequence length="316" mass="37054">MGLSSSKDIDLLVNFIENRQGATLALPWPEDYRLTLHSVENIPDISREDVQNWAKTYMCCEGELVVVGVIHKAKTRTCRGPIVLQGARGHIYVYNGFFDRSLYHVASSFHDLFSNGLRFFYPIYETCDYALDSTVALDMIAHSKSFSELLHYRNERKNAFFTLKTYPYKTFVRFCNLSMTGFSSKHLIQWRRKLQTSLLDVVFIVQHNFFGDWRELVVVFDGHGMLFCVDREESLLFIARNMSDFLKIGCLRYNENRRLHTQWFTQDTDYIKQVDEMFSRDVLCPLREHCQRSRRDRGLLKICTSLVRGINCIERG</sequence>
<organismHost>
    <name type="scientific">Homo sapiens</name>
    <name type="common">Human</name>
    <dbReference type="NCBI Taxonomy" id="9606"/>
</organismHost>